<proteinExistence type="evidence at protein level"/>
<evidence type="ECO:0000250" key="1">
    <source>
        <dbReference type="UniProtKB" id="P0DPI0"/>
    </source>
</evidence>
<evidence type="ECO:0000255" key="2">
    <source>
        <dbReference type="PROSITE-ProRule" id="PRU10095"/>
    </source>
</evidence>
<evidence type="ECO:0000269" key="3">
    <source>
    </source>
</evidence>
<evidence type="ECO:0000269" key="4">
    <source>
    </source>
</evidence>
<evidence type="ECO:0000269" key="5">
    <source>
    </source>
</evidence>
<evidence type="ECO:0000269" key="6">
    <source>
    </source>
</evidence>
<evidence type="ECO:0000269" key="7">
    <source>
    </source>
</evidence>
<evidence type="ECO:0000269" key="8">
    <source>
    </source>
</evidence>
<evidence type="ECO:0000269" key="9">
    <source>
    </source>
</evidence>
<evidence type="ECO:0000269" key="10">
    <source>
    </source>
</evidence>
<evidence type="ECO:0000269" key="11">
    <source>
    </source>
</evidence>
<evidence type="ECO:0000269" key="12">
    <source>
    </source>
</evidence>
<evidence type="ECO:0000269" key="13">
    <source>
    </source>
</evidence>
<evidence type="ECO:0000269" key="14">
    <source>
    </source>
</evidence>
<evidence type="ECO:0000269" key="15">
    <source>
    </source>
</evidence>
<evidence type="ECO:0000269" key="16">
    <source>
    </source>
</evidence>
<evidence type="ECO:0000269" key="17">
    <source>
    </source>
</evidence>
<evidence type="ECO:0000269" key="18">
    <source>
    </source>
</evidence>
<evidence type="ECO:0000269" key="19">
    <source>
    </source>
</evidence>
<evidence type="ECO:0000303" key="20">
    <source>
    </source>
</evidence>
<evidence type="ECO:0000303" key="21">
    <source>
    </source>
</evidence>
<evidence type="ECO:0000305" key="22"/>
<evidence type="ECO:0000305" key="23">
    <source>
    </source>
</evidence>
<evidence type="ECO:0000305" key="24">
    <source>
    </source>
</evidence>
<evidence type="ECO:0000305" key="25">
    <source>
    </source>
</evidence>
<evidence type="ECO:0000305" key="26">
    <source>
    </source>
</evidence>
<evidence type="ECO:0000305" key="27">
    <source>
    </source>
</evidence>
<evidence type="ECO:0000305" key="28">
    <source>
    </source>
</evidence>
<evidence type="ECO:0000305" key="29">
    <source>
    </source>
</evidence>
<evidence type="ECO:0000305" key="30">
    <source>
    </source>
</evidence>
<evidence type="ECO:0000305" key="31">
    <source>
    </source>
</evidence>
<evidence type="ECO:0007744" key="32">
    <source>
        <dbReference type="PDB" id="1T3A"/>
    </source>
</evidence>
<evidence type="ECO:0007744" key="33">
    <source>
        <dbReference type="PDB" id="1T3C"/>
    </source>
</evidence>
<evidence type="ECO:0007744" key="34">
    <source>
        <dbReference type="PDB" id="1ZKW"/>
    </source>
</evidence>
<evidence type="ECO:0007744" key="35">
    <source>
        <dbReference type="PDB" id="1ZKX"/>
    </source>
</evidence>
<evidence type="ECO:0007744" key="36">
    <source>
        <dbReference type="PDB" id="1ZL5"/>
    </source>
</evidence>
<evidence type="ECO:0007744" key="37">
    <source>
        <dbReference type="PDB" id="1ZL6"/>
    </source>
</evidence>
<evidence type="ECO:0007744" key="38">
    <source>
        <dbReference type="PDB" id="1ZN3"/>
    </source>
</evidence>
<evidence type="ECO:0007744" key="39">
    <source>
        <dbReference type="PDB" id="3FFZ"/>
    </source>
</evidence>
<evidence type="ECO:0007829" key="40">
    <source>
        <dbReference type="PDB" id="1T3A"/>
    </source>
</evidence>
<evidence type="ECO:0007829" key="41">
    <source>
        <dbReference type="PDB" id="1T3C"/>
    </source>
</evidence>
<evidence type="ECO:0007829" key="42">
    <source>
        <dbReference type="PDB" id="1ZKW"/>
    </source>
</evidence>
<evidence type="ECO:0007829" key="43">
    <source>
        <dbReference type="PDB" id="1ZL5"/>
    </source>
</evidence>
<evidence type="ECO:0007829" key="44">
    <source>
        <dbReference type="PDB" id="3FFZ"/>
    </source>
</evidence>
<evidence type="ECO:0007829" key="45">
    <source>
        <dbReference type="PDB" id="7K84"/>
    </source>
</evidence>
<evidence type="ECO:0007829" key="46">
    <source>
        <dbReference type="PDB" id="7UIA"/>
    </source>
</evidence>
<evidence type="ECO:0007829" key="47">
    <source>
        <dbReference type="PDB" id="7UIB"/>
    </source>
</evidence>
<dbReference type="EC" id="3.4.24.69" evidence="17"/>
<dbReference type="EMBL" id="X62089">
    <property type="protein sequence ID" value="CAA43999.1"/>
    <property type="molecule type" value="Genomic_DNA"/>
</dbReference>
<dbReference type="EMBL" id="X62683">
    <property type="protein sequence ID" value="CAA44558.1"/>
    <property type="molecule type" value="Genomic_DNA"/>
</dbReference>
<dbReference type="EMBL" id="X70815">
    <property type="protein sequence ID" value="CAA50146.1"/>
    <property type="molecule type" value="Genomic_DNA"/>
</dbReference>
<dbReference type="PIR" id="S08575">
    <property type="entry name" value="S08575"/>
</dbReference>
<dbReference type="PIR" id="S21178">
    <property type="entry name" value="S21178"/>
</dbReference>
<dbReference type="PDB" id="1T3A">
    <property type="method" value="X-ray"/>
    <property type="resolution" value="2.16 A"/>
    <property type="chains" value="A/B=2-422"/>
</dbReference>
<dbReference type="PDB" id="1T3C">
    <property type="method" value="X-ray"/>
    <property type="resolution" value="1.90 A"/>
    <property type="chains" value="A/B=2-422"/>
</dbReference>
<dbReference type="PDB" id="1ZKW">
    <property type="method" value="X-ray"/>
    <property type="resolution" value="2.17 A"/>
    <property type="chains" value="A/B=2-421"/>
</dbReference>
<dbReference type="PDB" id="1ZKX">
    <property type="method" value="X-ray"/>
    <property type="resolution" value="2.52 A"/>
    <property type="chains" value="A/B=2-421"/>
</dbReference>
<dbReference type="PDB" id="1ZL5">
    <property type="method" value="X-ray"/>
    <property type="resolution" value="2.60 A"/>
    <property type="chains" value="A/B=2-421"/>
</dbReference>
<dbReference type="PDB" id="1ZL6">
    <property type="method" value="X-ray"/>
    <property type="resolution" value="2.40 A"/>
    <property type="chains" value="A/B=2-421"/>
</dbReference>
<dbReference type="PDB" id="1ZN3">
    <property type="method" value="X-ray"/>
    <property type="resolution" value="2.60 A"/>
    <property type="chains" value="A/B=2-421"/>
</dbReference>
<dbReference type="PDB" id="3FFZ">
    <property type="method" value="X-ray"/>
    <property type="resolution" value="2.65 A"/>
    <property type="chains" value="A/B=1-1251"/>
</dbReference>
<dbReference type="PDB" id="7K7Y">
    <property type="method" value="X-ray"/>
    <property type="resolution" value="3.60 A"/>
    <property type="chains" value="A/B/E/G=1-845"/>
</dbReference>
<dbReference type="PDB" id="7K84">
    <property type="method" value="X-ray"/>
    <property type="resolution" value="2.50 A"/>
    <property type="chains" value="A=1-845"/>
</dbReference>
<dbReference type="PDB" id="7QFP">
    <property type="method" value="EM"/>
    <property type="resolution" value="3.70 A"/>
    <property type="chains" value="A=2-1250"/>
</dbReference>
<dbReference type="PDB" id="7UIA">
    <property type="method" value="X-ray"/>
    <property type="resolution" value="2.59 A"/>
    <property type="chains" value="A/D=846-1251"/>
</dbReference>
<dbReference type="PDB" id="7UIB">
    <property type="method" value="X-ray"/>
    <property type="resolution" value="2.77 A"/>
    <property type="chains" value="A/D=846-1251"/>
</dbReference>
<dbReference type="PDB" id="7UIE">
    <property type="method" value="X-ray"/>
    <property type="resolution" value="3.23 A"/>
    <property type="chains" value="A/D/F/H/J=846-1251"/>
</dbReference>
<dbReference type="PDB" id="9ARJ">
    <property type="method" value="EM"/>
    <property type="resolution" value="3.40 A"/>
    <property type="chains" value="A=1-1251"/>
</dbReference>
<dbReference type="PDB" id="9ARK">
    <property type="method" value="EM"/>
    <property type="resolution" value="4.10 A"/>
    <property type="chains" value="A=1-1251"/>
</dbReference>
<dbReference type="PDBsum" id="1T3A"/>
<dbReference type="PDBsum" id="1T3C"/>
<dbReference type="PDBsum" id="1ZKW"/>
<dbReference type="PDBsum" id="1ZKX"/>
<dbReference type="PDBsum" id="1ZL5"/>
<dbReference type="PDBsum" id="1ZL6"/>
<dbReference type="PDBsum" id="1ZN3"/>
<dbReference type="PDBsum" id="3FFZ"/>
<dbReference type="PDBsum" id="7K7Y"/>
<dbReference type="PDBsum" id="7K84"/>
<dbReference type="PDBsum" id="7QFP"/>
<dbReference type="PDBsum" id="7UIA"/>
<dbReference type="PDBsum" id="7UIB"/>
<dbReference type="PDBsum" id="7UIE"/>
<dbReference type="PDBsum" id="9ARJ"/>
<dbReference type="PDBsum" id="9ARK"/>
<dbReference type="SMR" id="Q00496"/>
<dbReference type="DIP" id="DIP-46083N"/>
<dbReference type="IntAct" id="Q00496">
    <property type="interactions" value="4"/>
</dbReference>
<dbReference type="MINT" id="Q00496"/>
<dbReference type="BindingDB" id="Q00496"/>
<dbReference type="ChEMBL" id="CHEMBL1697662"/>
<dbReference type="DrugBank" id="DB13897">
    <property type="generic name" value="Equine Botulinum Neurotoxin E Immune FAB2"/>
</dbReference>
<dbReference type="TCDB" id="1.C.8.1.3">
    <property type="family name" value="the botulinum and tetanus toxin (btt) family"/>
</dbReference>
<dbReference type="ABCD" id="Q00496">
    <property type="antibodies" value="10 sequenced antibodies"/>
</dbReference>
<dbReference type="KEGG" id="ag:CAA43999"/>
<dbReference type="OrthoDB" id="1936604at2"/>
<dbReference type="BRENDA" id="3.4.24.69">
    <property type="organism ID" value="1462"/>
</dbReference>
<dbReference type="Reactome" id="R-HSA-5250992">
    <property type="pathway name" value="Toxicity of botulinum toxin type E (botE)"/>
</dbReference>
<dbReference type="EvolutionaryTrace" id="Q00496"/>
<dbReference type="GO" id="GO:0005576">
    <property type="term" value="C:extracellular region"/>
    <property type="evidence" value="ECO:0007669"/>
    <property type="project" value="UniProtKB-SubCell"/>
</dbReference>
<dbReference type="GO" id="GO:0044161">
    <property type="term" value="C:host cell cytoplasmic vesicle"/>
    <property type="evidence" value="ECO:0007669"/>
    <property type="project" value="UniProtKB-SubCell"/>
</dbReference>
<dbReference type="GO" id="GO:0044164">
    <property type="term" value="C:host cell cytosol"/>
    <property type="evidence" value="ECO:0007669"/>
    <property type="project" value="UniProtKB-SubCell"/>
</dbReference>
<dbReference type="GO" id="GO:0020002">
    <property type="term" value="C:host cell plasma membrane"/>
    <property type="evidence" value="ECO:0007669"/>
    <property type="project" value="UniProtKB-KW"/>
</dbReference>
<dbReference type="GO" id="GO:0044231">
    <property type="term" value="C:host cell presynaptic membrane"/>
    <property type="evidence" value="ECO:0007669"/>
    <property type="project" value="UniProtKB-SubCell"/>
</dbReference>
<dbReference type="GO" id="GO:0016020">
    <property type="term" value="C:membrane"/>
    <property type="evidence" value="ECO:0007669"/>
    <property type="project" value="UniProtKB-KW"/>
</dbReference>
<dbReference type="GO" id="GO:0008289">
    <property type="term" value="F:lipid binding"/>
    <property type="evidence" value="ECO:0007669"/>
    <property type="project" value="UniProtKB-KW"/>
</dbReference>
<dbReference type="GO" id="GO:0004222">
    <property type="term" value="F:metalloendopeptidase activity"/>
    <property type="evidence" value="ECO:0007669"/>
    <property type="project" value="UniProtKB-EC"/>
</dbReference>
<dbReference type="GO" id="GO:0008320">
    <property type="term" value="F:protein transmembrane transporter activity"/>
    <property type="evidence" value="ECO:0000269"/>
    <property type="project" value="Reactome"/>
</dbReference>
<dbReference type="GO" id="GO:0090729">
    <property type="term" value="F:toxin activity"/>
    <property type="evidence" value="ECO:0007669"/>
    <property type="project" value="UniProtKB-KW"/>
</dbReference>
<dbReference type="GO" id="GO:0008270">
    <property type="term" value="F:zinc ion binding"/>
    <property type="evidence" value="ECO:0000314"/>
    <property type="project" value="UniProtKB"/>
</dbReference>
<dbReference type="GO" id="GO:0006508">
    <property type="term" value="P:proteolysis"/>
    <property type="evidence" value="ECO:0007669"/>
    <property type="project" value="UniProtKB-KW"/>
</dbReference>
<dbReference type="CDD" id="cd23392">
    <property type="entry name" value="Toxin_R_bind_C_BoNTE"/>
    <property type="match status" value="1"/>
</dbReference>
<dbReference type="DisProt" id="DP00732"/>
<dbReference type="FunFam" id="2.60.120.200:FF:000184">
    <property type="entry name" value="Botulinum neurotoxin type A"/>
    <property type="match status" value="1"/>
</dbReference>
<dbReference type="FunFam" id="3.90.1240.10:FF:000001">
    <property type="entry name" value="Botulinum neurotoxin type B"/>
    <property type="match status" value="1"/>
</dbReference>
<dbReference type="Gene3D" id="2.60.120.200">
    <property type="match status" value="1"/>
</dbReference>
<dbReference type="Gene3D" id="2.80.10.50">
    <property type="match status" value="1"/>
</dbReference>
<dbReference type="Gene3D" id="1.20.1120.10">
    <property type="entry name" value="Clostridium botulinum neurotoxin b, 'coiled-coil' domain"/>
    <property type="match status" value="1"/>
</dbReference>
<dbReference type="Gene3D" id="3.90.1240.10">
    <property type="entry name" value="Metalloproteases ('zincins'), catalytic domain like"/>
    <property type="match status" value="1"/>
</dbReference>
<dbReference type="InterPro" id="IPR000395">
    <property type="entry name" value="Bot/tetX_LC"/>
</dbReference>
<dbReference type="InterPro" id="IPR036248">
    <property type="entry name" value="Clostridium_toxin_transloc"/>
</dbReference>
<dbReference type="InterPro" id="IPR013320">
    <property type="entry name" value="ConA-like_dom_sf"/>
</dbReference>
<dbReference type="InterPro" id="IPR011065">
    <property type="entry name" value="Kunitz_inhibitor_STI-like_sf"/>
</dbReference>
<dbReference type="InterPro" id="IPR013104">
    <property type="entry name" value="Toxin_rcpt-bd_C"/>
</dbReference>
<dbReference type="InterPro" id="IPR012928">
    <property type="entry name" value="Toxin_rcpt-bd_N"/>
</dbReference>
<dbReference type="InterPro" id="IPR012500">
    <property type="entry name" value="Toxin_trans"/>
</dbReference>
<dbReference type="Pfam" id="PF01742">
    <property type="entry name" value="Peptidase_M27"/>
    <property type="match status" value="1"/>
</dbReference>
<dbReference type="Pfam" id="PF07951">
    <property type="entry name" value="Toxin_R_bind_C"/>
    <property type="match status" value="1"/>
</dbReference>
<dbReference type="Pfam" id="PF07953">
    <property type="entry name" value="Toxin_R_bind_N"/>
    <property type="match status" value="1"/>
</dbReference>
<dbReference type="Pfam" id="PF07952">
    <property type="entry name" value="Toxin_trans"/>
    <property type="match status" value="1"/>
</dbReference>
<dbReference type="PRINTS" id="PR00760">
    <property type="entry name" value="BONTOXILYSIN"/>
</dbReference>
<dbReference type="SUPFAM" id="SSF58091">
    <property type="entry name" value="Clostridium neurotoxins, 'coiled-coil' domain"/>
    <property type="match status" value="1"/>
</dbReference>
<dbReference type="SUPFAM" id="SSF49899">
    <property type="entry name" value="Concanavalin A-like lectins/glucanases"/>
    <property type="match status" value="1"/>
</dbReference>
<dbReference type="SUPFAM" id="SSF55486">
    <property type="entry name" value="Metalloproteases ('zincins'), catalytic domain"/>
    <property type="match status" value="1"/>
</dbReference>
<dbReference type="SUPFAM" id="SSF50386">
    <property type="entry name" value="STI-like"/>
    <property type="match status" value="1"/>
</dbReference>
<dbReference type="PROSITE" id="PS00142">
    <property type="entry name" value="ZINC_PROTEASE"/>
    <property type="match status" value="1"/>
</dbReference>
<feature type="initiator methionine" description="Removed" evidence="14">
    <location>
        <position position="1"/>
    </location>
</feature>
<feature type="chain" id="PRO_0000444907" description="Botulinum neurotoxin type E">
    <location>
        <begin position="2"/>
        <end position="1251"/>
    </location>
</feature>
<feature type="chain" id="PRO_0000029221" description="Botulinum neurotoxin E light chain">
    <location>
        <begin position="2"/>
        <end position="422"/>
    </location>
</feature>
<feature type="chain" id="PRO_0000029222" description="Botulinum neurotoxin E heavy chain">
    <location>
        <begin position="423"/>
        <end position="1251"/>
    </location>
</feature>
<feature type="region of interest" description="Translocation domain (TD)" evidence="28">
    <location>
        <begin position="423"/>
        <end position="819"/>
    </location>
</feature>
<feature type="region of interest" description="Belt" evidence="28">
    <location>
        <begin position="466"/>
        <end position="515"/>
    </location>
</feature>
<feature type="region of interest" description="N-terminus of receptor binding domain (N-RBD)" evidence="28">
    <location>
        <begin position="845"/>
        <end position="1067"/>
    </location>
</feature>
<feature type="region of interest" description="Receptor-binding domain (TD)" evidence="28">
    <location>
        <begin position="850"/>
        <end position="1251"/>
    </location>
</feature>
<feature type="region of interest" description="C-terminus of receptor binding domain (C-RBD)" evidence="28">
    <location>
        <begin position="1068"/>
        <end position="1251"/>
    </location>
</feature>
<feature type="short sequence motif" description="Host ganglioside-binding motif" evidence="1 29">
    <location>
        <begin position="1221"/>
        <end position="1224"/>
    </location>
</feature>
<feature type="active site" description="Proton acceptor" evidence="2 24">
    <location>
        <position position="213"/>
    </location>
</feature>
<feature type="binding site" evidence="2 32 33 34 35 37 38 39">
    <location>
        <position position="212"/>
    </location>
    <ligand>
        <name>Zn(2+)</name>
        <dbReference type="ChEBI" id="CHEBI:29105"/>
        <note>catalytic</note>
    </ligand>
</feature>
<feature type="binding site" evidence="2 32 33 34 35 37 38 39">
    <location>
        <position position="216"/>
    </location>
    <ligand>
        <name>Zn(2+)</name>
        <dbReference type="ChEBI" id="CHEBI:29105"/>
        <note>catalytic</note>
    </ligand>
</feature>
<feature type="binding site" evidence="32 33 34 35 37 38 39">
    <location>
        <position position="251"/>
    </location>
    <ligand>
        <name>Zn(2+)</name>
        <dbReference type="ChEBI" id="CHEBI:29105"/>
        <note>catalytic</note>
    </ligand>
</feature>
<feature type="disulfide bond" description="Interchain (between light and heavy chains)" evidence="10 26 39">
    <location>
        <begin position="412"/>
        <end position="426"/>
    </location>
</feature>
<feature type="mutagenesis site" description="KM for SNAP25 unchanged, kcat 10-fold reduced." evidence="7">
    <original>ETN</original>
    <variation>AAA</variation>
    <location>
        <begin position="159"/>
        <end position="161"/>
    </location>
</feature>
<feature type="mutagenesis site" description="No cleavage of SNAP25." evidence="6">
    <original>E</original>
    <variation>Q</variation>
    <location>
        <position position="213"/>
    </location>
</feature>
<feature type="mutagenesis site" description="KM unchanged, kcat 10-fold reduced." evidence="7">
    <original>E</original>
    <variation>A</variation>
    <location>
        <position position="250"/>
    </location>
</feature>
<feature type="mutagenesis site" description="KM unchanged, kcat 30-fold reduced, binds zinc in crystal." evidence="7">
    <original>E</original>
    <variation>A</variation>
    <location>
        <position position="336"/>
    </location>
</feature>
<feature type="mutagenesis site" description="No cleavage of SNAP25. KM unchanged, kcat 5700-fold reduced, zinc replaced by H(2)O in crystal." evidence="6 7">
    <original>E</original>
    <variation>Q</variation>
    <location>
        <position position="336"/>
    </location>
</feature>
<feature type="mutagenesis site" description="KM unchanged, kcat 700-fold reduced." evidence="7">
    <original>R</original>
    <variation>A</variation>
    <location>
        <position position="348"/>
    </location>
</feature>
<feature type="mutagenesis site" description="No cleavage of SNAP25." evidence="7">
    <original>Y</original>
    <variation>A</variation>
    <location>
        <position position="351"/>
    </location>
</feature>
<feature type="mutagenesis site" description="Significantly decreased toxicity, dramatically decreased binding of heavy chain to synaptosomes, significantly decreased binding to ganglioside GT1b." evidence="12">
    <original>E</original>
    <variation>A</variation>
    <location>
        <position position="1172"/>
    </location>
</feature>
<feature type="mutagenesis site" description="Dramatically decreased toxicity, dramatically decreased binding of heavy chain to synaptosomes, dramatically decreased binding to ganglioside GT1b." evidence="12">
    <original>W</original>
    <variation>L</variation>
    <location>
        <position position="1223"/>
    </location>
</feature>
<feature type="sequence conflict" description="In Ref. 2; CAA44558." evidence="22" ref="2">
    <original>R</original>
    <variation>G</variation>
    <location>
        <position position="177"/>
    </location>
</feature>
<feature type="sequence conflict" description="In Ref. 2; CAA44558 and 3; no nucleotide entry." evidence="22" ref="2 3">
    <original>C</original>
    <variation>S</variation>
    <location>
        <position position="198"/>
    </location>
</feature>
<feature type="sequence conflict" description="In Ref. 2; CAA44558." evidence="22" ref="2">
    <original>R</original>
    <variation>A</variation>
    <location>
        <position position="340"/>
    </location>
</feature>
<feature type="sequence conflict" description="In Ref. 2; CAA44558 and 6; CAA50146." evidence="22" ref="2 6">
    <original>I</original>
    <variation>L</variation>
    <location>
        <position position="773"/>
    </location>
</feature>
<feature type="sequence conflict" description="In Ref. 2; CAA44558 and 6; CAA50146." evidence="22" ref="2 6">
    <original>FE</original>
    <variation>LQ</variation>
    <location>
        <begin position="963"/>
        <end position="964"/>
    </location>
</feature>
<feature type="sequence conflict" description="In Ref. 2; CAA44558 and 6; CAA50146." evidence="22" ref="2 6">
    <original>R</original>
    <variation>A</variation>
    <location>
        <position position="967"/>
    </location>
</feature>
<feature type="sequence conflict" description="In Ref. 2; CAA44558." evidence="22" ref="2">
    <original>N</original>
    <variation>NN</variation>
    <location>
        <position position="1195"/>
    </location>
</feature>
<feature type="strand" evidence="41">
    <location>
        <begin position="15"/>
        <end position="22"/>
    </location>
</feature>
<feature type="strand" evidence="41">
    <location>
        <begin position="30"/>
        <end position="36"/>
    </location>
</feature>
<feature type="strand" evidence="41">
    <location>
        <begin position="39"/>
        <end position="45"/>
    </location>
</feature>
<feature type="helix" evidence="41">
    <location>
        <begin position="52"/>
        <end position="55"/>
    </location>
</feature>
<feature type="turn" evidence="41">
    <location>
        <begin position="61"/>
        <end position="64"/>
    </location>
</feature>
<feature type="strand" evidence="43">
    <location>
        <begin position="65"/>
        <end position="67"/>
    </location>
</feature>
<feature type="turn" evidence="41">
    <location>
        <begin position="71"/>
        <end position="74"/>
    </location>
</feature>
<feature type="helix" evidence="41">
    <location>
        <begin position="77"/>
        <end position="94"/>
    </location>
</feature>
<feature type="helix" evidence="41">
    <location>
        <begin position="98"/>
        <end position="108"/>
    </location>
</feature>
<feature type="strand" evidence="45">
    <location>
        <begin position="121"/>
        <end position="123"/>
    </location>
</feature>
<feature type="turn" evidence="41">
    <location>
        <begin position="128"/>
        <end position="130"/>
    </location>
</feature>
<feature type="strand" evidence="41">
    <location>
        <begin position="132"/>
        <end position="135"/>
    </location>
</feature>
<feature type="strand" evidence="41">
    <location>
        <begin position="141"/>
        <end position="144"/>
    </location>
</feature>
<feature type="strand" evidence="41">
    <location>
        <begin position="147"/>
        <end position="152"/>
    </location>
</feature>
<feature type="strand" evidence="41">
    <location>
        <begin position="161"/>
        <end position="164"/>
    </location>
</feature>
<feature type="helix" evidence="41">
    <location>
        <begin position="168"/>
        <end position="170"/>
    </location>
</feature>
<feature type="helix" evidence="41">
    <location>
        <begin position="173"/>
        <end position="175"/>
    </location>
</feature>
<feature type="strand" evidence="41">
    <location>
        <begin position="176"/>
        <end position="178"/>
    </location>
</feature>
<feature type="strand" evidence="41">
    <location>
        <begin position="182"/>
        <end position="185"/>
    </location>
</feature>
<feature type="strand" evidence="41">
    <location>
        <begin position="190"/>
        <end position="195"/>
    </location>
</feature>
<feature type="strand" evidence="44">
    <location>
        <begin position="196"/>
        <end position="199"/>
    </location>
</feature>
<feature type="strand" evidence="41">
    <location>
        <begin position="201"/>
        <end position="203"/>
    </location>
</feature>
<feature type="helix" evidence="41">
    <location>
        <begin position="206"/>
        <end position="221"/>
    </location>
</feature>
<feature type="turn" evidence="41">
    <location>
        <begin position="226"/>
        <end position="230"/>
    </location>
</feature>
<feature type="strand" evidence="40">
    <location>
        <begin position="231"/>
        <end position="233"/>
    </location>
</feature>
<feature type="turn" evidence="41">
    <location>
        <begin position="235"/>
        <end position="239"/>
    </location>
</feature>
<feature type="strand" evidence="42">
    <location>
        <begin position="240"/>
        <end position="242"/>
    </location>
</feature>
<feature type="helix" evidence="41">
    <location>
        <begin position="249"/>
        <end position="255"/>
    </location>
</feature>
<feature type="helix" evidence="41">
    <location>
        <begin position="257"/>
        <end position="262"/>
    </location>
</feature>
<feature type="helix" evidence="41">
    <location>
        <begin position="265"/>
        <end position="287"/>
    </location>
</feature>
<feature type="helix" evidence="41">
    <location>
        <begin position="294"/>
        <end position="296"/>
    </location>
</feature>
<feature type="helix" evidence="41">
    <location>
        <begin position="297"/>
        <end position="306"/>
    </location>
</feature>
<feature type="strand" evidence="41">
    <location>
        <begin position="309"/>
        <end position="311"/>
    </location>
</feature>
<feature type="strand" evidence="44">
    <location>
        <begin position="313"/>
        <end position="315"/>
    </location>
</feature>
<feature type="strand" evidence="41">
    <location>
        <begin position="317"/>
        <end position="319"/>
    </location>
</feature>
<feature type="helix" evidence="41">
    <location>
        <begin position="321"/>
        <end position="333"/>
    </location>
</feature>
<feature type="helix" evidence="41">
    <location>
        <begin position="336"/>
        <end position="343"/>
    </location>
</feature>
<feature type="strand" evidence="45">
    <location>
        <begin position="349"/>
        <end position="351"/>
    </location>
</feature>
<feature type="strand" evidence="41">
    <location>
        <begin position="357"/>
        <end position="361"/>
    </location>
</feature>
<feature type="turn" evidence="41">
    <location>
        <begin position="366"/>
        <end position="368"/>
    </location>
</feature>
<feature type="turn" evidence="41">
    <location>
        <begin position="371"/>
        <end position="373"/>
    </location>
</feature>
<feature type="helix" evidence="41">
    <location>
        <begin position="378"/>
        <end position="387"/>
    </location>
</feature>
<feature type="turn" evidence="41">
    <location>
        <begin position="389"/>
        <end position="391"/>
    </location>
</feature>
<feature type="helix" evidence="41">
    <location>
        <begin position="393"/>
        <end position="395"/>
    </location>
</feature>
<feature type="turn" evidence="41">
    <location>
        <begin position="400"/>
        <end position="403"/>
    </location>
</feature>
<feature type="helix" evidence="41">
    <location>
        <begin position="404"/>
        <end position="408"/>
    </location>
</feature>
<feature type="strand" evidence="44">
    <location>
        <begin position="418"/>
        <end position="420"/>
    </location>
</feature>
<feature type="strand" evidence="45">
    <location>
        <begin position="422"/>
        <end position="430"/>
    </location>
</feature>
<feature type="helix" evidence="45">
    <location>
        <begin position="431"/>
        <end position="433"/>
    </location>
</feature>
<feature type="helix" evidence="45">
    <location>
        <begin position="440"/>
        <end position="442"/>
    </location>
</feature>
<feature type="helix" evidence="45">
    <location>
        <begin position="446"/>
        <end position="449"/>
    </location>
</feature>
<feature type="helix" evidence="44">
    <location>
        <begin position="468"/>
        <end position="472"/>
    </location>
</feature>
<feature type="strand" evidence="45">
    <location>
        <begin position="505"/>
        <end position="508"/>
    </location>
</feature>
<feature type="strand" evidence="45">
    <location>
        <begin position="510"/>
        <end position="513"/>
    </location>
</feature>
<feature type="helix" evidence="45">
    <location>
        <begin position="519"/>
        <end position="524"/>
    </location>
</feature>
<feature type="strand" evidence="45">
    <location>
        <begin position="536"/>
        <end position="539"/>
    </location>
</feature>
<feature type="helix" evidence="45">
    <location>
        <begin position="541"/>
        <end position="546"/>
    </location>
</feature>
<feature type="strand" evidence="45">
    <location>
        <begin position="550"/>
        <end position="552"/>
    </location>
</feature>
<feature type="helix" evidence="45">
    <location>
        <begin position="557"/>
        <end position="564"/>
    </location>
</feature>
<feature type="helix" evidence="45">
    <location>
        <begin position="569"/>
        <end position="571"/>
    </location>
</feature>
<feature type="helix" evidence="45">
    <location>
        <begin position="572"/>
        <end position="587"/>
    </location>
</feature>
<feature type="strand" evidence="44">
    <location>
        <begin position="594"/>
        <end position="596"/>
    </location>
</feature>
<feature type="helix" evidence="45">
    <location>
        <begin position="606"/>
        <end position="610"/>
    </location>
</feature>
<feature type="turn" evidence="45">
    <location>
        <begin position="615"/>
        <end position="620"/>
    </location>
</feature>
<feature type="helix" evidence="45">
    <location>
        <begin position="621"/>
        <end position="628"/>
    </location>
</feature>
<feature type="helix" evidence="45">
    <location>
        <begin position="630"/>
        <end position="633"/>
    </location>
</feature>
<feature type="helix" evidence="45">
    <location>
        <begin position="660"/>
        <end position="692"/>
    </location>
</feature>
<feature type="helix" evidence="45">
    <location>
        <begin position="694"/>
        <end position="724"/>
    </location>
</feature>
<feature type="helix" evidence="45">
    <location>
        <begin position="728"/>
        <end position="734"/>
    </location>
</feature>
<feature type="helix" evidence="45">
    <location>
        <begin position="740"/>
        <end position="779"/>
    </location>
</feature>
<feature type="helix" evidence="45">
    <location>
        <begin position="781"/>
        <end position="799"/>
    </location>
</feature>
<feature type="helix" evidence="45">
    <location>
        <begin position="801"/>
        <end position="804"/>
    </location>
</feature>
<feature type="helix" evidence="45">
    <location>
        <begin position="805"/>
        <end position="807"/>
    </location>
</feature>
<feature type="helix" evidence="45">
    <location>
        <begin position="808"/>
        <end position="820"/>
    </location>
</feature>
<feature type="helix" evidence="45">
    <location>
        <begin position="827"/>
        <end position="829"/>
    </location>
</feature>
<feature type="strand" evidence="44">
    <location>
        <begin position="830"/>
        <end position="832"/>
    </location>
</feature>
<feature type="strand" evidence="44">
    <location>
        <begin position="842"/>
        <end position="844"/>
    </location>
</feature>
<feature type="strand" evidence="46">
    <location>
        <begin position="849"/>
        <end position="858"/>
    </location>
</feature>
<feature type="strand" evidence="46">
    <location>
        <begin position="861"/>
        <end position="864"/>
    </location>
</feature>
<feature type="strand" evidence="46">
    <location>
        <begin position="866"/>
        <end position="868"/>
    </location>
</feature>
<feature type="strand" evidence="46">
    <location>
        <begin position="871"/>
        <end position="876"/>
    </location>
</feature>
<feature type="strand" evidence="47">
    <location>
        <begin position="879"/>
        <end position="881"/>
    </location>
</feature>
<feature type="strand" evidence="46">
    <location>
        <begin position="888"/>
        <end position="894"/>
    </location>
</feature>
<feature type="strand" evidence="46">
    <location>
        <begin position="896"/>
        <end position="901"/>
    </location>
</feature>
<feature type="turn" evidence="46">
    <location>
        <begin position="904"/>
        <end position="906"/>
    </location>
</feature>
<feature type="strand" evidence="46">
    <location>
        <begin position="909"/>
        <end position="912"/>
    </location>
</feature>
<feature type="strand" evidence="46">
    <location>
        <begin position="915"/>
        <end position="922"/>
    </location>
</feature>
<feature type="turn" evidence="44">
    <location>
        <begin position="929"/>
        <end position="931"/>
    </location>
</feature>
<feature type="strand" evidence="46">
    <location>
        <begin position="937"/>
        <end position="943"/>
    </location>
</feature>
<feature type="turn" evidence="44">
    <location>
        <begin position="945"/>
        <end position="947"/>
    </location>
</feature>
<feature type="strand" evidence="46">
    <location>
        <begin position="949"/>
        <end position="955"/>
    </location>
</feature>
<feature type="strand" evidence="46">
    <location>
        <begin position="958"/>
        <end position="964"/>
    </location>
</feature>
<feature type="strand" evidence="44">
    <location>
        <begin position="966"/>
        <end position="968"/>
    </location>
</feature>
<feature type="strand" evidence="46">
    <location>
        <begin position="970"/>
        <end position="976"/>
    </location>
</feature>
<feature type="strand" evidence="46">
    <location>
        <begin position="981"/>
        <end position="983"/>
    </location>
</feature>
<feature type="strand" evidence="46">
    <location>
        <begin position="989"/>
        <end position="997"/>
    </location>
</feature>
<feature type="strand" evidence="46">
    <location>
        <begin position="1001"/>
        <end position="1007"/>
    </location>
</feature>
<feature type="strand" evidence="46">
    <location>
        <begin position="1010"/>
        <end position="1016"/>
    </location>
</feature>
<feature type="strand" evidence="46">
    <location>
        <begin position="1027"/>
        <end position="1035"/>
    </location>
</feature>
<feature type="strand" evidence="46">
    <location>
        <begin position="1041"/>
        <end position="1052"/>
    </location>
</feature>
<feature type="helix" evidence="46">
    <location>
        <begin position="1056"/>
        <end position="1065"/>
    </location>
</feature>
<feature type="strand" evidence="46">
    <location>
        <begin position="1077"/>
        <end position="1079"/>
    </location>
</feature>
<feature type="strand" evidence="44">
    <location>
        <begin position="1081"/>
        <end position="1083"/>
    </location>
</feature>
<feature type="strand" evidence="46">
    <location>
        <begin position="1086"/>
        <end position="1090"/>
    </location>
</feature>
<feature type="strand" evidence="44">
    <location>
        <begin position="1096"/>
        <end position="1100"/>
    </location>
</feature>
<feature type="strand" evidence="46">
    <location>
        <begin position="1104"/>
        <end position="1107"/>
    </location>
</feature>
<feature type="strand" evidence="46">
    <location>
        <begin position="1126"/>
        <end position="1133"/>
    </location>
</feature>
<feature type="strand" evidence="47">
    <location>
        <begin position="1136"/>
        <end position="1138"/>
    </location>
</feature>
<feature type="strand" evidence="46">
    <location>
        <begin position="1147"/>
        <end position="1155"/>
    </location>
</feature>
<feature type="strand" evidence="46">
    <location>
        <begin position="1158"/>
        <end position="1164"/>
    </location>
</feature>
<feature type="strand" evidence="46">
    <location>
        <begin position="1168"/>
        <end position="1177"/>
    </location>
</feature>
<feature type="strand" evidence="46">
    <location>
        <begin position="1186"/>
        <end position="1193"/>
    </location>
</feature>
<feature type="strand" evidence="46">
    <location>
        <begin position="1196"/>
        <end position="1202"/>
    </location>
</feature>
<feature type="strand" evidence="46">
    <location>
        <begin position="1207"/>
        <end position="1214"/>
    </location>
</feature>
<feature type="strand" evidence="46">
    <location>
        <begin position="1217"/>
        <end position="1222"/>
    </location>
</feature>
<feature type="helix" evidence="46">
    <location>
        <begin position="1223"/>
        <end position="1226"/>
    </location>
</feature>
<feature type="strand" evidence="46">
    <location>
        <begin position="1228"/>
        <end position="1231"/>
    </location>
</feature>
<feature type="helix" evidence="46">
    <location>
        <begin position="1234"/>
        <end position="1237"/>
    </location>
</feature>
<feature type="strand" evidence="46">
    <location>
        <begin position="1239"/>
        <end position="1242"/>
    </location>
</feature>
<name>BXE_CLOBO</name>
<reference key="1">
    <citation type="journal article" date="1992" name="Biochem. Biophys. Res. Commun.">
        <title>Sequences of the botulinal neurotoxin E derived from Clostridium botulinum type E (strain Beluga) and Clostridium butyricum (strains ATCC 43181 and ATCC 43755).</title>
        <authorList>
            <person name="Poulet S."/>
            <person name="Hauser D."/>
            <person name="Quanz M."/>
            <person name="Niemann H."/>
            <person name="Popoff M.R."/>
        </authorList>
    </citation>
    <scope>NUCLEOTIDE SEQUENCE [GENOMIC DNA]</scope>
    <source>
        <strain>Beluga / Type E</strain>
    </source>
</reference>
<reference key="2">
    <citation type="journal article" date="1992" name="Eur. J. Biochem.">
        <title>The complete amino acid sequence of the Clostridium botulinum type-E neurotoxin, derived by nucleotide-sequence analysis of the encoding gene.</title>
        <authorList>
            <person name="Whelan S.M."/>
            <person name="Elmore M.J."/>
            <person name="Bodsworth N.J."/>
            <person name="Atkinson T."/>
            <person name="Minton N.P."/>
        </authorList>
    </citation>
    <scope>NUCLEOTIDE SEQUENCE [GENOMIC DNA]</scope>
    <source>
        <strain>NCTC 11219 / Type E</strain>
    </source>
</reference>
<reference key="3">
    <citation type="journal article" date="1990" name="J. Biol. Chem.">
        <title>The complete sequence of botulinum neurotoxin type A and comparison with other clostridial neurotoxins.</title>
        <authorList>
            <person name="Binz T."/>
            <person name="Kurazono H."/>
            <person name="Wille M."/>
            <person name="Frevert J."/>
            <person name="Wernars K."/>
            <person name="Niemann H."/>
        </authorList>
    </citation>
    <scope>NUCLEOTIDE SEQUENCE [GENOMIC DNA] OF 1-252</scope>
    <source>
        <strain>Beluga / Type E</strain>
    </source>
</reference>
<reference key="4">
    <citation type="journal article" date="1985" name="Arch. Biochem. Biophys.">
        <title>Partial amino acid sequences of botulinum neurotoxins types B and E.</title>
        <authorList>
            <person name="Schmidt J.J."/>
            <person name="Sathyamoorthy V."/>
            <person name="Dasgupta B.R."/>
        </authorList>
    </citation>
    <scope>PROTEIN SEQUENCE OF 2-14</scope>
    <source>
        <strain>Alaska E43 / Type E3</strain>
    </source>
</reference>
<reference key="5">
    <citation type="journal article" date="1990" name="Biochimie">
        <title>Botulinum neurotoxin type E fragmented with endoproteinase Lys-C reveals the site trypsin nicks and homology with tetanus neurotoxin.</title>
        <authorList>
            <person name="Gimenez J.A."/>
            <person name="Dasgupta B.R."/>
        </authorList>
    </citation>
    <scope>PROTEIN SEQUENCE OF 420-427</scope>
    <source>
        <strain>Alaska E43 / Type E3</strain>
    </source>
</reference>
<reference key="6">
    <citation type="journal article" date="1993" name="J. Clin. Microbiol.">
        <title>Gene probes for identification of the botulinal neurotoxin gene and specific identification of neurotoxin types B, E, and F.</title>
        <authorList>
            <person name="Campbell K.D."/>
            <person name="Collins M.D."/>
            <person name="East A.K."/>
        </authorList>
    </citation>
    <scope>NUCLEOTIDE SEQUENCE [GENOMIC DNA] OF 616-982</scope>
    <source>
        <strain>Hazen 36208 / ATCC 9564 / Type E</strain>
    </source>
</reference>
<reference key="7">
    <citation type="journal article" date="1983" name="Toxicon">
        <title>Purification and amino acid composition of type E botulinum neurotoxin.</title>
        <authorList>
            <person name="DasGupta B.R."/>
            <person name="Rasmussen S."/>
        </authorList>
    </citation>
    <scope>RELEASED AS SINGLE CHAIN</scope>
    <source>
        <strain>Type E</strain>
    </source>
</reference>
<reference key="8">
    <citation type="journal article" date="1985" name="J. Biol. Chem.">
        <title>Separation, purification, partial characterization and comparison of the heavy and light chains of botulinum neurotoxin types A, B, and E.</title>
        <authorList>
            <person name="Sathyamoorthy V."/>
            <person name="DasGupta B.R."/>
        </authorList>
    </citation>
    <scope>RELEASED AS SINGLE CHAIN</scope>
    <source>
        <strain>Alaska E43 / Type E3</strain>
    </source>
</reference>
<reference key="9">
    <citation type="journal article" date="1992" name="J. Biol. Chem.">
        <title>Botulinum neurotoxins are zinc proteins.</title>
        <authorList>
            <person name="Schiavo G."/>
            <person name="Rossetto O."/>
            <person name="Santucci A."/>
            <person name="Dasgupta B.R."/>
            <person name="Montecucco C."/>
        </authorList>
    </citation>
    <scope>IDENTIFICATION AS A ZINC-BINDING PROTEIN</scope>
    <scope>COFACTOR</scope>
    <source>
        <strain>Type E</strain>
    </source>
</reference>
<reference key="10">
    <citation type="journal article" date="1992" name="J. Infect. Dis.">
        <title>Clinical and laboratory comparison of botulism from toxin types A, B, and E in the United States, 1975-1988.</title>
        <authorList>
            <person name="Woodruff B.A."/>
            <person name="Griffin P.M."/>
            <person name="McCroskey L.M."/>
            <person name="Smart J.F."/>
            <person name="Wainwright R.B."/>
            <person name="Bryant R.G."/>
            <person name="Hutwagner L.C."/>
            <person name="Hatheway C.L."/>
        </authorList>
    </citation>
    <scope>HOST RANGE</scope>
    <scope>EPIDEMIOLOGY</scope>
</reference>
<reference key="11">
    <citation type="journal article" date="1993" name="FEBS Lett.">
        <title>Botulinum neurotoxins serotypes A and E cleave SNAP-25 at distinct COOH-terminal peptide bonds.</title>
        <authorList>
            <person name="Schiavo G."/>
            <person name="Santtuci A."/>
            <person name="Dasgupta B.R."/>
            <person name="Mehta P.P."/>
            <person name="Jontes J."/>
            <person name="Benfenati F."/>
            <person name="Wilson M.C."/>
            <person name="Montecucco C."/>
        </authorList>
    </citation>
    <scope>FUNCTION (BOTULINUM NEUROTOXIN E LIGHT CHAIN)</scope>
    <scope>IDENTIFICATION OF SUBSTRATE</scope>
    <scope>CATALYTIC ACTIVITY</scope>
    <scope>SUBCELLULAR LOCATION (BOTULINUM NEUROTOXIN E LIGHT CHAIN)</scope>
    <source>
        <strain>Type E</strain>
    </source>
</reference>
<reference key="12">
    <citation type="journal article" date="1994" name="J. Biol. Chem.">
        <title>Proteolysis of SNAP-25 by types E and A botulinal neurotoxins.</title>
        <authorList>
            <person name="Binz T."/>
            <person name="Blasi J."/>
            <person name="Yamasaki S."/>
            <person name="Baumeister A."/>
            <person name="Link E."/>
            <person name="Suedhof T.C."/>
            <person name="Jahn R."/>
            <person name="Niemann H."/>
        </authorList>
    </citation>
    <scope>FUNCTION (BOTULINUM NEUROTOXIN TYPE E AND BOTULINUM NEUROTOXIN E LIGHT CHAIN)</scope>
    <scope>IDENTIFICATION OF SUBSTRATE</scope>
    <scope>CATALYTIC ACTIVITY</scope>
    <scope>ACTIVITY REGULATION</scope>
    <scope>SUBCELLULAR LOCATION (BOTULINUM NEUROTOXIN E LIGHT CHAIN)</scope>
    <source>
        <strain>Beluga / Type E</strain>
    </source>
</reference>
<reference key="13">
    <citation type="journal article" date="1999" name="J. Cell Sci.">
        <title>Functional characterisation of tetanus and botulinum neurotoxins binding domains.</title>
        <authorList>
            <person name="Lalli G."/>
            <person name="Herreros J."/>
            <person name="Osborne S.L."/>
            <person name="Montecucco C."/>
            <person name="Rossetto O."/>
            <person name="Schiavo G."/>
        </authorList>
    </citation>
    <scope>FUNCTION (BOTULINUM NEUROTOXIN E HEAVY CHAIN)</scope>
    <scope>SUBCELLULAR LOCATION (BOTULINUM NEUROTOXIN E HEAVY CHAIN)</scope>
    <source>
        <strain>NCTC 11219 / Type E</strain>
    </source>
</reference>
<reference key="14">
    <citation type="journal article" date="1999" name="J. Neurochem.">
        <title>Proteolysis of SNAP-25 isoforms by botulinum neurotoxin types A, C, and E: domains and amino acid residues controlling the formation of enzyme-substrate complexes and cleavage.</title>
        <authorList>
            <person name="Vaidyanathan V.V."/>
            <person name="Yoshino K."/>
            <person name="Jahnz M."/>
            <person name="Doerries C."/>
            <person name="Bade S."/>
            <person name="Nauenburg S."/>
            <person name="Niemann H."/>
            <person name="Binz T."/>
        </authorList>
    </citation>
    <scope>FUNCTION (BOTULINUM NEUROTOXIN E LIGHT CHAIN)</scope>
    <scope>SUBSTRATE SPECIFICITY</scope>
    <scope>CATALYTIC ACTIVITY</scope>
    <source>
        <strain>Beluga / Type E</strain>
    </source>
</reference>
<reference key="15">
    <citation type="journal article" date="2007" name="J. Biol. Chem.">
        <title>Crucial role of the disulfide bridge between botulinum neurotoxin light and heavy chains in protease translocation across membranes.</title>
        <authorList>
            <person name="Fischer A."/>
            <person name="Montal M."/>
        </authorList>
    </citation>
    <scope>FUNCTION (BOTULINUM NEUROTOXIN E LIGHT AND BOTULINUM NEUROTOXIN E HEAVY CHAIN)</scope>
    <scope>DISULFIDE BOND</scope>
    <source>
        <strain>Type E</strain>
    </source>
</reference>
<reference key="16">
    <citation type="journal article" date="2007" name="PLoS Pathog.">
        <title>Botulinum neurotoxin heavy chain belt as an intramolecular chaperone for the light chain.</title>
        <authorList>
            <person name="Brunger A.T."/>
            <person name="Breidenbach M.A."/>
            <person name="Jin R."/>
            <person name="Fischer A."/>
            <person name="Santos J.S."/>
            <person name="Montal M."/>
        </authorList>
    </citation>
    <scope>DISCUSSION OF BELT FUNCTION</scope>
    <scope>DOMAIN</scope>
</reference>
<reference key="17">
    <citation type="journal article" date="2008" name="Mol. Biol. Cell">
        <title>Glycosylated SV2A and SV2B mediate the entry of botulinum neurotoxin E into neurons.</title>
        <authorList>
            <person name="Dong M."/>
            <person name="Liu H."/>
            <person name="Tepp W.H."/>
            <person name="Johnson E.A."/>
            <person name="Janz R."/>
            <person name="Chapman E.R."/>
        </authorList>
    </citation>
    <scope>FUNCTION (BOTULINUM NEUROTOXIN TYPE E)</scope>
    <scope>IDENTIFICATION OF HOST RECEPTOR</scope>
    <scope>INTERACTION WITH HOST SV2A AND SV2B</scope>
    <source>
        <strain>Type E</strain>
    </source>
</reference>
<reference key="18">
    <citation type="journal article" date="2009" name="Biochemistry">
        <title>Glycosylated SV2 and gangliosides as dual receptors for botulinum neurotoxin serotype F.</title>
        <authorList>
            <person name="Fu Z."/>
            <person name="Chen C."/>
            <person name="Barbieri J.T."/>
            <person name="Kim J.J."/>
            <person name="Baldwin M.R."/>
        </authorList>
    </citation>
    <scope>FUNCTION (BOTULINUM NEUROTOXIN E HEAVY CHAIN)</scope>
    <scope>INTERACTION WITH HOST SV2 AND SYT1</scope>
</reference>
<reference key="19">
    <citation type="journal article" date="2009" name="J. Neurochem.">
        <title>Botulinum neurotoxins C, E and F bind gangliosides via a conserved binding site prior to stimulation-dependent uptake with botulinum neurotoxin F utilising the three isoforms of SV2 as second receptor.</title>
        <authorList>
            <person name="Rummel A."/>
            <person name="Haefner K."/>
            <person name="Mahrhold S."/>
            <person name="Darashchonak N."/>
            <person name="Holt M."/>
            <person name="Jahn R."/>
            <person name="Beermann S."/>
            <person name="Karnath T."/>
            <person name="Bigalke H."/>
            <person name="Binz T."/>
        </authorList>
    </citation>
    <scope>FUNCTION (BOTULINUM NEUROTOXIN TYPE E AND BOTULINUM NEUROTOXIN E HEAVY CHAIN)</scope>
    <scope>INTERACTION WITH HOST SV2A AND SV2B</scope>
    <scope>GANGLIOSIDE-BINDING</scope>
    <scope>MUTAGENESIS OF GLU-1172 AND TRP-1223</scope>
    <source>
        <strain>NCTC 11219 / Type E</strain>
    </source>
</reference>
<reference key="20">
    <citation type="journal article" date="2012" name="Biochemistry">
        <title>Botulinum neurotoxins B and E translocate at different rates and exhibit divergent responses to GT1b and low pH.</title>
        <authorList>
            <person name="Sun S."/>
            <person name="Tepp W.H."/>
            <person name="Johnson E.A."/>
            <person name="Chapman E.R."/>
        </authorList>
    </citation>
    <scope>FUNCTION (BOTULINUM NEUROTOXIN TYPE E)</scope>
    <scope>SUBUNIT</scope>
    <scope>SUBCELLULAR LOCATION (BOTULINUM NEUROTOXIN TYPE E)</scope>
    <source>
        <strain>Type E</strain>
    </source>
</reference>
<reference key="21">
    <citation type="journal article" date="2017" name="Pharmacol. Rev.">
        <title>Botulinum neurotoxins: Biology, pharmacology, and toxicology.</title>
        <authorList>
            <person name="Pirazzini M."/>
            <person name="Rossetto O."/>
            <person name="Eleopra R."/>
            <person name="Montecucco C."/>
        </authorList>
    </citation>
    <scope>REVIEW</scope>
</reference>
<reference evidence="32 33" key="22">
    <citation type="journal article" date="2004" name="Biochemistry">
        <title>Structural analysis of botulinum neurotoxin type E catalytic domain and its mutant Glu212--&gt;Gln reveals the pivotal role of the Glu212 carboxylate in the catalytic pathway.</title>
        <authorList>
            <person name="Agarwal R."/>
            <person name="Eswaramoorthy S."/>
            <person name="Kumaran D."/>
            <person name="Binz T."/>
            <person name="Swaminathan S."/>
        </authorList>
    </citation>
    <scope>X-RAY CRYSTALLOGRAPHY (1.90 ANGSTROMS) OF 2-422 IN COMPLEX WITH ZINC</scope>
    <scope>FUNCTION (BOTULINUM NEUROTOXIN E LIGHT CHAIN)</scope>
    <scope>REACTION MECHANISM</scope>
    <scope>ACTIVE SITE</scope>
    <scope>COFACTOR</scope>
    <scope>MUTAGENESIS OF GLU-213</scope>
    <source>
        <strain>Type E</strain>
    </source>
</reference>
<reference evidence="34 35 36 37 38" key="23">
    <citation type="journal article" date="2005" name="Biochemistry">
        <title>Analysis of active site residues of botulinum neurotoxin E by mutational, functional, and structural studies: Glu335Gln is an apoenzyme.</title>
        <authorList>
            <person name="Agarwal R."/>
            <person name="Binz T."/>
            <person name="Swaminathan S."/>
        </authorList>
    </citation>
    <scope>X-RAY CRYSTALLOGRAPHY (2.17 ANGSTROMS) OF MUTATED 2-421 IN COMPLEX WITH ZINC</scope>
    <scope>FUNCTION (BOTULINUM NEUROTOXIN E LIGHT CHAIN)</scope>
    <scope>REACTION MECHANISM</scope>
    <scope>COFACTOR</scope>
    <scope>BIOPHYSICOCHEMICAL PROPERTIES</scope>
    <scope>BIOTECHNOLOGY</scope>
    <scope>MUTAGENESIS OF 159-GLU--ASN-161; GLU-250; GLU-336; ARG-348 AND TYR-351</scope>
    <source>
        <strain>Type E</strain>
    </source>
</reference>
<reference key="24">
    <citation type="journal article" date="2008" name="J. Biol. Chem.">
        <title>Molecular architecture of botulinum neurotoxin E revealed by single particle electron microscopy.</title>
        <authorList>
            <person name="Fischer A."/>
            <person name="Garcia-Rodriguez C."/>
            <person name="Geren I."/>
            <person name="Lou J."/>
            <person name="Marks J.D."/>
            <person name="Nakagawa T."/>
            <person name="Montal M."/>
        </authorList>
    </citation>
    <scope>STRUCTURE BY ELECTRON MICROSCOPY (24.0 ANGSTROMS)</scope>
    <scope>DOMAIN</scope>
    <source>
        <strain>Type E</strain>
    </source>
</reference>
<reference evidence="39" key="25">
    <citation type="journal article" date="2009" name="J. Mol. Biol.">
        <title>Domain organization in Clostridium botulinum neurotoxin type E is unique: its implication in faster translocation.</title>
        <authorList>
            <person name="Kumaran D."/>
            <person name="Eswaramoorthy S."/>
            <person name="Furey W."/>
            <person name="Navaza J."/>
            <person name="Sax M."/>
            <person name="Swaminathan S."/>
        </authorList>
    </citation>
    <scope>X-RAY CRYSTALLOGRAPHY (2.65 ANGSTROMS) IN COMPLEX WITH ZINC</scope>
    <scope>COFACTOR</scope>
    <scope>DOMAIN</scope>
    <scope>DISULFIDE BONDS</scope>
    <source>
        <strain>Type E</strain>
    </source>
</reference>
<keyword id="KW-0002">3D-structure</keyword>
<keyword id="KW-0903">Direct protein sequencing</keyword>
<keyword id="KW-1015">Disulfide bond</keyword>
<keyword id="KW-1032">Host cell membrane</keyword>
<keyword id="KW-1035">Host cytoplasm</keyword>
<keyword id="KW-1036">Host cytoplasmic vesicle</keyword>
<keyword id="KW-1043">Host membrane</keyword>
<keyword id="KW-1051">Host synapse</keyword>
<keyword id="KW-0378">Hydrolase</keyword>
<keyword id="KW-0446">Lipid-binding</keyword>
<keyword id="KW-0472">Membrane</keyword>
<keyword id="KW-0479">Metal-binding</keyword>
<keyword id="KW-0482">Metalloprotease</keyword>
<keyword id="KW-0528">Neurotoxin</keyword>
<keyword id="KW-0645">Protease</keyword>
<keyword id="KW-0964">Secreted</keyword>
<keyword id="KW-0800">Toxin</keyword>
<keyword id="KW-0812">Transmembrane</keyword>
<keyword id="KW-0843">Virulence</keyword>
<keyword id="KW-0862">Zinc</keyword>
<gene>
    <name evidence="20" type="primary">botE</name>
</gene>
<organism>
    <name type="scientific">Clostridium botulinum</name>
    <dbReference type="NCBI Taxonomy" id="1491"/>
    <lineage>
        <taxon>Bacteria</taxon>
        <taxon>Bacillati</taxon>
        <taxon>Bacillota</taxon>
        <taxon>Clostridia</taxon>
        <taxon>Eubacteriales</taxon>
        <taxon>Clostridiaceae</taxon>
        <taxon>Clostridium</taxon>
    </lineage>
</organism>
<sequence>MPKINSFNYNDPVNDRTILYIKPGGCQEFYKSFNIMKNIWIIPERNVIGTTPQDFHPPTSLKNGDSSYYDPNYLQSDEEKDRFLKIVTKIFNRINNNLSGGILLEELSKANPYLGNDNTPDNQFHIGDASAVEIKFSNGSQDILLPNVIIMGAEPDLFETNSSNISLRNNYMPSNHRFGSIAIVTFSPEYSFRFNDNCMNEFIQDPALTLMHELIHSLHGLYGAKGITTKYTITQKQNPLITNIRGTNIEEFLTFGGTDLNIITSAQSNDIYTNLLADYKKIASKLSKVQVSNPLLNPYKDVFEAKYGLDKDASGIYSVNINKFNDIFKKLYSFTEFDLRTKFQVKCRQTYIGQYKYFKLSNLLNDSIYNISEGYNINNLKVNFRGQNANLNPRIITPITGRGLVKKIIRFCKNIVSVKGIRKSICIEINNGELFFVASENSYNDDNINTPKEIDDTVTSNNNYENDLDQVILNFNSESAPGLSDEKLNLTIQNDAYIPKYDSNGTSDIEQHDVNELNVFFYLDAQKVPEGENNVNLTSSIDTALLEQPKIYTFFSSEFINNVNKPVQAALFVSWIQQVLVDFTTEANQKSTVDKIADISIVVPYIGLALNIGNEAQKGNFKDALELLGAGILLEFEPELLIPTILVFTIKSFLGSSDNKNKVIKAINNALKERDEKWKEVYSFIVSNWMTKINTQFNKRKEQMYQALQNQVNAIKTIIESKYNSYTLEEKNELTNKYDIKQIENELNQKVSIAMNNIDRFLTESSISYLMKIINEVKINKLREYDENVKTYLLNYIIQHGSILGESQQELNSMVTDTLNNSIPFKLSSYTDDKILISYFNKFFKRIKSSSVLNMRYKNDKYVDTSGYDSNININGDVYKYPTNKNQFGIYNDKLSEVNISQNDYIIYDNKYKNFSISFWVRIPNYDNKIVNVNNEYTIINCMRDNNSGWKVSLNHNEIIWTFEDNRGINQKLAFNYGNANGISDYINKWIFVTITNDRLGDSKLYINGNLIDQKSILNLGNIHVSDNILFKIVNCSYTRYIGIRYFNIFDKELDETEIQTLYSNEPNTNILKDFWGNYLLYDKEYYLLNVLKPNNFIDRRKDSTLSINNIRSTILLANRLYSGIKVKIQRVNNSSTNDNLVRKNDQVYINFVASKTHLFPLYADTATTNKEKTIKISSSGNRFNQVVVMNSVGNCTMNFKNNNGNNIGLLGFKADTVVASTWYYTHMRDHTNSNGCFWNFISEEHGWQEK</sequence>
<comment type="function">
    <molecule>Botulinum neurotoxin type E</molecule>
    <text evidence="1 9 11 12 13 31">Botulinum toxin causes flaccid paralysis by inhibiting neurotransmitter (acetylcholine) release from the presynaptic membranes of nerve terminals of eukaryotic host skeletal and autonomic nervous system, with frequent heart or respiratory failure. Precursor of botulinum neurotoxin E which has 2 coreceptors; complex polysialylated gangliosides found on neural tissue and specific membrane-anchored proteins found in synaptic vesicles. Receptor proteins are exposed on host presynaptic cell membrane during neurotransmitter release, when the toxin heavy chain (HC) binds to them (PubMed:19476346, PubMed:19650874). Upon synaptic vesicle recycling the toxin is taken up via the endocytic pathway. When the pH of the toxin-containing endosome drops a structural rearrangement occurs so that the N-terminus of the HC forms pores that allows the light chain (LC) to translocate into the cytosol (PubMed:22720883). Once in the cytosol the disulfide bond linking the 2 subunits is reduced and LC cleaves its target protein on synaptic vesicles, preventing their fusion with the cytoplasmic membrane and thus neurotransmitter release (By similarity). Electrical stimulation increases uptake of toxin, probably by transiently exposing a receptor found in eukaryotic target synaptic vesicles (PubMed:19476346, PubMed:19650874). Uses the large lumenal domain of synaptic vesicle glycoproteins 2A and 2B (SV2A and SV2B) but not SV2C as receptor; an N-linked glycan of SV2 is essential for receptor function (PubMed:18815274, PubMed:19476346). Host cell gangliosides are also required for neurotoxin uptake and full toxicity (PubMed:18815274, PubMed:19650874). BoNT/E is a 'coincidence detector'; it requires simultaneous binding to coreceptor GT1b and low pH to transform into a membrane-bound, oligomeric channel (PubMed:22720883). Requires trypsinization and reduction before it can be used in assays in vitro (PubMed:8294407).</text>
</comment>
<comment type="function">
    <molecule>Botulinum neurotoxin E light chain</molecule>
    <text evidence="6 7 8 17 18 19">Has proteolytic activity (PubMed:8243676, PubMed:8294407, PubMed:9886085). After translocation into the eukaryotic host cytosol, inhibits neurotransmitter release by acting as a zinc endopeptidase that catalyzes the hydrolysis of the '180-Arg-|-Ile-181' bond in SNAP25 (PubMed:8243676, PubMed:8294407, PubMed:9886085). Hydrolyzes the '185-Arg-|-Ile-186' bond of mouse SNAP23, but not in human which has a different sequence (PubMed:9886085). Recognizes the '146-Met--Asp-186' region of SNAP25 (PubMed:9886085). The reaction mechanism probably has a nucleophilic water held in place by Glu-213 (PubMed:15157097, PubMed:15938619). Reduction of the interchain disulfide bond occurs in the host cytosol and probably prevents retrotranslocation into the synaptic vesicle (PubMed:17666397).</text>
</comment>
<comment type="function">
    <molecule>Botulinum neurotoxin E heavy chain</molecule>
    <text evidence="1 3 8 9 11 12 27">Responsible for host epithelial cell transcytosis, host nerve cell targeting and translocation of light chain (LC) into host cytosol (PubMed:17666397). Composed of 3 subdomains; the translocation domain (TD), and N-terminus and C-terminus of the receptor-binding domain (RBD). The RBD is responsible for the adherence of the toxin to the cell surface (PubMed:10413679). It probably simultaneously recognizes 2 coreceptors; polysialated gangliosides and either of the receptor proteins SV2A and SV2B in close proximity on host synaptic vesicles (PubMed:18815274, PubMed:19476346, PubMed:19650874). The N-terminus of the TD wraps an extended belt around the perimeter of the light chain (LC), protecting Zn(2+) in the active site (PubMed:19118561). The belt may also prevent premature LC dissociation from the translocation channel and protect toxin prior to translocation (PubMed:17907800). The TD inserts into synaptic vesicle membrane to allow translocation into the host cytosol (By similarity). Responsible for adherence of the toxin to the cell surface; HC alone prevents uptake of whole toxin by neural cells, and delays paralysis onset by 154% (PubMed:10413679). Significantly decreases uptake and toxicity of whole BoNT/E, but also interferes with uptake of BoNT/C; binds GT1b in vitro (PubMed:19650874). Binds to synaptic vesicle glycoproteins SV2A and SV2B which serve as coreceptors with gangliosides (PubMed:18815274, PubMed:19650874). Interaction with SV2 proteins requires SV2 glycosylation (PubMed:19476346). HC alone significantly decreases uptake and toxicity of whole BoNT/E (PubMed:19650874). HC is responsible for translocation of LC into the host cytosol; an intact disulfide bond between the 2 subunits is required for translocation, which is reduced upon contact with the host cytosol (PubMed:17666397).</text>
</comment>
<comment type="catalytic activity">
    <reaction evidence="17 18 19">
        <text>Limited hydrolysis of proteins of the neuroexocytosis apparatus, synaptobrevins, SNAP25 or syntaxin. No detected action on small molecule substrates.</text>
        <dbReference type="EC" id="3.4.24.69"/>
    </reaction>
</comment>
<comment type="cofactor">
    <cofactor evidence="4 6 7 10">
        <name>Zn(2+)</name>
        <dbReference type="ChEBI" id="CHEBI:29105"/>
    </cofactor>
    <text evidence="4 6 7 10">Binds 1 zinc ion per subunit (PubMed:1429690, PubMed:15157097, PubMed:15938619, PubMed:19118561).</text>
</comment>
<comment type="activity regulation">
    <text evidence="18">Proteolysis of SNAP25 by whole toxin inhibited by dipicolinic acid, 1,10-phenanthroline and EDTA (PubMed:8294407).</text>
</comment>
<comment type="biophysicochemical properties">
    <kinetics>
        <KM evidence="7">7.9 uM for purified SNAP25 with botulinum neurotoxin E light chain</KM>
        <text evidence="7">kcat is 257 min(-1) with botulinum neurotoxin E light chain.</text>
    </kinetics>
</comment>
<comment type="subunit">
    <text evidence="9 10 11 12 13 15 16">Heterodimer; disulfide-linked heterodimer of a light chain (LC) and a heavy chain (HC); cleavage occurs after bacterial export by host proteases (PubMed:19118561, PubMed:4030755, PubMed:6353669). The LC has the proteolytic/pharmacological activity, while the N- and C-terminal of the HC mediate channel formation and toxin binding, respectively. Oligomerizes in the presence of coreceptor ganglioside GT1b between pH 4.4 and 8.0; it might oligomerize on host cell surface (PubMed:22720883). Interacts with host synaptic vesicle glycoproteins SV2A and SV2B (PubMed:18815274, PubMed:19650874). HC interacts with a complex including at least host SV2 and synaptotagmin-1 (SYT1); copurification depends on glycosylation of SV2 (PubMed:19476346).</text>
</comment>
<comment type="subcellular location">
    <molecule>Botulinum neurotoxin type E</molecule>
    <subcellularLocation>
        <location evidence="31">Secreted</location>
    </subcellularLocation>
    <text evidence="13">At pH 4.4 in the presence of ganglioside GT1b, becomes a membrane-associated hydrophobic protein (PubMed:22720883).</text>
</comment>
<comment type="subcellular location">
    <molecule>Botulinum neurotoxin E light chain</molecule>
    <subcellularLocation>
        <location>Secreted</location>
    </subcellularLocation>
    <subcellularLocation>
        <location evidence="30 31">Host cytoplasm</location>
        <location evidence="30 31">Host cytosol</location>
    </subcellularLocation>
</comment>
<comment type="subcellular location">
    <molecule>Botulinum neurotoxin E heavy chain</molecule>
    <subcellularLocation>
        <location>Secreted</location>
    </subcellularLocation>
    <subcellularLocation>
        <location evidence="23">Host synapse</location>
        <location evidence="23">Host presynaptic cell membrane</location>
    </subcellularLocation>
    <subcellularLocation>
        <location evidence="1">Host cytoplasmic vesicle</location>
        <location evidence="1">Host secretory vesicle</location>
        <location evidence="1">Host synaptic vesicle membrane</location>
        <topology evidence="22">Multi-pass membrane protein</topology>
    </subcellularLocation>
</comment>
<comment type="domain">
    <molecule>Botulinum neurotoxin E light chain</molecule>
    <text evidence="17 18 19">Has protease activity (PubMed:8243676, PubMed:8294407, PubMed:9886085).</text>
</comment>
<comment type="domain">
    <molecule>Botulinum neurotoxin E heavy chain</molecule>
    <text evidence="9 10 11 12 27">Has 3 functional domains; the translocation domain (TD) and the receptor-binding domain (RBD) which is further subdivided into N- and C-terminal domains (N-RBD and C-RBD) (PubMed:19118561). In BoNT/E the domains are arranged differently than BoNT/A and BoNT/B; in BoNT/E the LC and RBD are on the same side of the TD and are in contact, whereas in BoNT/A and BoNT/B the LC is separated from the RBD by the TD (PubMed:19118561). The putative transmembrane region is closer to the receptor-binding regions in this toxin, which may explain why it acts faster than BoNT/A and BoNT/B (PubMed:19118561). The N-terminus of the TD wraps an extended belt around the perimeter of the LC, partially protecting Zn(2+) in the active site (PubMed:19118561). The belt may be a pseudosubstrate inhibitor which serves as an intramolecular chaperone for the LC prior to its translocation into the host cytosol (PubMed:17907800). The RBD binds transiently exposed coreceptors on the host presynaptic cell membrane (PubMed:18815274, PubMed:19476346, PubMed:19650874).</text>
</comment>
<comment type="biotechnology">
    <text evidence="25">Double mutants Gln-213/Gln-336 or Gln-213/Ala-351 might be suitable as vaccine candiates (PubMed:15938619).</text>
</comment>
<comment type="miscellaneous">
    <text>There are seven antigenically distinct forms of botulinum neurotoxin: Types A, B, C, D, E, F, and G; new subtypes are quite frequent.</text>
</comment>
<comment type="miscellaneous">
    <text evidence="1">Botulism poisoning is usually food-borne, either by ingesting toxin or bacterial-contaminated food, or less frequently by inhalation poisoning. In both cases the neurotoxin binds to the apical surface of epithelial cells in the gut or airway. Toxin undergoes receptor-mediated endocytosis (using a different receptor than on target nerve cells), transcytosis across the epithelial cells and release into the general circulation. Once in the general circulation it binds to its target cells.</text>
</comment>
<comment type="miscellaneous">
    <text evidence="5">Types A, B and E are the most frequent cause of adult human foodborne botulism; type A is the most severe, while type E has the shortest incubation period (PubMed:1431246).</text>
</comment>
<comment type="miscellaneous">
    <text evidence="10 15 16 31">Unlike botulinum neurotoxin type A, type E is released from bacteria as a single chain and cleaved by host proteases into the active dichain (PubMed:19118561, PubMed:4030755, PubMed:6353669, PubMed:8294407).</text>
</comment>
<comment type="similarity">
    <text evidence="22">Belongs to the peptidase M27 family.</text>
</comment>
<comment type="online information" name="BotDB - A Database Resource for Clostridial Neurotoxins">
    <link uri="https://botdb.abcc.ncifcrf.gov/"/>
</comment>
<accession>Q00496</accession>
<accession>Q45862</accession>
<protein>
    <recommendedName>
        <fullName>Botulinum neurotoxin type E</fullName>
        <shortName evidence="21">BoNT/E</shortName>
    </recommendedName>
    <alternativeName>
        <fullName>Bontoxilysin-E</fullName>
    </alternativeName>
    <component>
        <recommendedName>
            <fullName>Botulinum neurotoxin E light chain</fullName>
            <shortName>LC</shortName>
            <ecNumber evidence="17">3.4.24.69</ecNumber>
        </recommendedName>
    </component>
    <component>
        <recommendedName>
            <fullName>Botulinum neurotoxin E heavy chain</fullName>
            <shortName>HC</shortName>
        </recommendedName>
    </component>
</protein>